<gene>
    <name type="primary">pcm</name>
    <name type="ordered locus">MTH_827</name>
</gene>
<feature type="chain" id="PRO_0000111920" description="Protein-L-isoaspartate O-methyltransferase">
    <location>
        <begin position="1"/>
        <end position="217"/>
    </location>
</feature>
<feature type="active site" evidence="1">
    <location>
        <position position="59"/>
    </location>
</feature>
<name>PIMT_METTH</name>
<keyword id="KW-0963">Cytoplasm</keyword>
<keyword id="KW-0489">Methyltransferase</keyword>
<keyword id="KW-1185">Reference proteome</keyword>
<keyword id="KW-0949">S-adenosyl-L-methionine</keyword>
<keyword id="KW-0808">Transferase</keyword>
<organism>
    <name type="scientific">Methanothermobacter thermautotrophicus (strain ATCC 29096 / DSM 1053 / JCM 10044 / NBRC 100330 / Delta H)</name>
    <name type="common">Methanobacterium thermoautotrophicum</name>
    <dbReference type="NCBI Taxonomy" id="187420"/>
    <lineage>
        <taxon>Archaea</taxon>
        <taxon>Methanobacteriati</taxon>
        <taxon>Methanobacteriota</taxon>
        <taxon>Methanomada group</taxon>
        <taxon>Methanobacteria</taxon>
        <taxon>Methanobacteriales</taxon>
        <taxon>Methanobacteriaceae</taxon>
        <taxon>Methanothermobacter</taxon>
    </lineage>
</organism>
<protein>
    <recommendedName>
        <fullName>Protein-L-isoaspartate O-methyltransferase</fullName>
        <ecNumber>2.1.1.77</ecNumber>
    </recommendedName>
    <alternativeName>
        <fullName>L-isoaspartyl protein carboxyl methyltransferase</fullName>
    </alternativeName>
    <alternativeName>
        <fullName>Protein L-isoaspartyl methyltransferase</fullName>
    </alternativeName>
    <alternativeName>
        <fullName>Protein-beta-aspartate methyltransferase</fullName>
        <shortName>PIMT</shortName>
    </alternativeName>
</protein>
<proteinExistence type="inferred from homology"/>
<accession>O26915</accession>
<sequence>MMDERRRMVQDLMERGYIKSEAVRRAMERVPREEFVPEDEMHRAYMDMPLPIGEGQTISAPHMVAMIAEILDLEPGMKVLEIGTGCGYNAAVIAEIIGPEGHLYTVERIGILYERARKKLRSLGYDNITVIHGDGSQGFADEAPYSRIYVTAAAPYIPDPLMKQLEIGGKLLIPVGSDKFYQELVLIERTSADDYRSRNLGGVAFVPLIGKHGWKFH</sequence>
<reference key="1">
    <citation type="journal article" date="1997" name="J. Bacteriol.">
        <title>Complete genome sequence of Methanobacterium thermoautotrophicum deltaH: functional analysis and comparative genomics.</title>
        <authorList>
            <person name="Smith D.R."/>
            <person name="Doucette-Stamm L.A."/>
            <person name="Deloughery C."/>
            <person name="Lee H.-M."/>
            <person name="Dubois J."/>
            <person name="Aldredge T."/>
            <person name="Bashirzadeh R."/>
            <person name="Blakely D."/>
            <person name="Cook R."/>
            <person name="Gilbert K."/>
            <person name="Harrison D."/>
            <person name="Hoang L."/>
            <person name="Keagle P."/>
            <person name="Lumm W."/>
            <person name="Pothier B."/>
            <person name="Qiu D."/>
            <person name="Spadafora R."/>
            <person name="Vicare R."/>
            <person name="Wang Y."/>
            <person name="Wierzbowski J."/>
            <person name="Gibson R."/>
            <person name="Jiwani N."/>
            <person name="Caruso A."/>
            <person name="Bush D."/>
            <person name="Safer H."/>
            <person name="Patwell D."/>
            <person name="Prabhakar S."/>
            <person name="McDougall S."/>
            <person name="Shimer G."/>
            <person name="Goyal A."/>
            <person name="Pietrovski S."/>
            <person name="Church G.M."/>
            <person name="Daniels C.J."/>
            <person name="Mao J.-I."/>
            <person name="Rice P."/>
            <person name="Noelling J."/>
            <person name="Reeve J.N."/>
        </authorList>
    </citation>
    <scope>NUCLEOTIDE SEQUENCE [LARGE SCALE GENOMIC DNA]</scope>
    <source>
        <strain>ATCC 29096 / DSM 1053 / JCM 10044 / NBRC 100330 / Delta H</strain>
    </source>
</reference>
<comment type="function">
    <text evidence="1">Catalyzes the methyl esterification of L-isoaspartyl residues in peptides and proteins that result from spontaneous decomposition of normal L-aspartyl and L-asparaginyl residues. It plays a role in the repair and/or degradation of damaged proteins (By similarity).</text>
</comment>
<comment type="catalytic activity">
    <reaction>
        <text>[protein]-L-isoaspartate + S-adenosyl-L-methionine = [protein]-L-isoaspartate alpha-methyl ester + S-adenosyl-L-homocysteine</text>
        <dbReference type="Rhea" id="RHEA:12705"/>
        <dbReference type="Rhea" id="RHEA-COMP:12143"/>
        <dbReference type="Rhea" id="RHEA-COMP:12144"/>
        <dbReference type="ChEBI" id="CHEBI:57856"/>
        <dbReference type="ChEBI" id="CHEBI:59789"/>
        <dbReference type="ChEBI" id="CHEBI:90596"/>
        <dbReference type="ChEBI" id="CHEBI:90598"/>
        <dbReference type="EC" id="2.1.1.77"/>
    </reaction>
</comment>
<comment type="subcellular location">
    <subcellularLocation>
        <location evidence="1">Cytoplasm</location>
    </subcellularLocation>
</comment>
<comment type="similarity">
    <text evidence="2">Belongs to the methyltransferase superfamily. L-isoaspartyl/D-aspartyl protein methyltransferase family.</text>
</comment>
<dbReference type="EC" id="2.1.1.77"/>
<dbReference type="EMBL" id="AE000666">
    <property type="protein sequence ID" value="AAB85325.1"/>
    <property type="molecule type" value="Genomic_DNA"/>
</dbReference>
<dbReference type="PIR" id="C69210">
    <property type="entry name" value="C69210"/>
</dbReference>
<dbReference type="RefSeq" id="WP_010876460.1">
    <property type="nucleotide sequence ID" value="NC_000916.1"/>
</dbReference>
<dbReference type="SMR" id="O26915"/>
<dbReference type="FunCoup" id="O26915">
    <property type="interactions" value="57"/>
</dbReference>
<dbReference type="STRING" id="187420.MTH_827"/>
<dbReference type="PaxDb" id="187420-MTH_827"/>
<dbReference type="EnsemblBacteria" id="AAB85325">
    <property type="protein sequence ID" value="AAB85325"/>
    <property type="gene ID" value="MTH_827"/>
</dbReference>
<dbReference type="GeneID" id="1471235"/>
<dbReference type="KEGG" id="mth:MTH_827"/>
<dbReference type="PATRIC" id="fig|187420.15.peg.810"/>
<dbReference type="HOGENOM" id="CLU_055432_2_0_2"/>
<dbReference type="InParanoid" id="O26915"/>
<dbReference type="Proteomes" id="UP000005223">
    <property type="component" value="Chromosome"/>
</dbReference>
<dbReference type="GO" id="GO:0005737">
    <property type="term" value="C:cytoplasm"/>
    <property type="evidence" value="ECO:0007669"/>
    <property type="project" value="UniProtKB-SubCell"/>
</dbReference>
<dbReference type="GO" id="GO:0004719">
    <property type="term" value="F:protein-L-isoaspartate (D-aspartate) O-methyltransferase activity"/>
    <property type="evidence" value="ECO:0007669"/>
    <property type="project" value="UniProtKB-UniRule"/>
</dbReference>
<dbReference type="GO" id="GO:0032259">
    <property type="term" value="P:methylation"/>
    <property type="evidence" value="ECO:0007669"/>
    <property type="project" value="UniProtKB-KW"/>
</dbReference>
<dbReference type="GO" id="GO:0036211">
    <property type="term" value="P:protein modification process"/>
    <property type="evidence" value="ECO:0007669"/>
    <property type="project" value="UniProtKB-UniRule"/>
</dbReference>
<dbReference type="GO" id="GO:0030091">
    <property type="term" value="P:protein repair"/>
    <property type="evidence" value="ECO:0007669"/>
    <property type="project" value="UniProtKB-UniRule"/>
</dbReference>
<dbReference type="CDD" id="cd02440">
    <property type="entry name" value="AdoMet_MTases"/>
    <property type="match status" value="1"/>
</dbReference>
<dbReference type="FunFam" id="3.40.50.150:FF:000010">
    <property type="entry name" value="Protein-L-isoaspartate O-methyltransferase"/>
    <property type="match status" value="1"/>
</dbReference>
<dbReference type="Gene3D" id="3.40.50.150">
    <property type="entry name" value="Vaccinia Virus protein VP39"/>
    <property type="match status" value="1"/>
</dbReference>
<dbReference type="HAMAP" id="MF_00090">
    <property type="entry name" value="PIMT"/>
    <property type="match status" value="1"/>
</dbReference>
<dbReference type="InterPro" id="IPR000682">
    <property type="entry name" value="PCMT"/>
</dbReference>
<dbReference type="InterPro" id="IPR029063">
    <property type="entry name" value="SAM-dependent_MTases_sf"/>
</dbReference>
<dbReference type="NCBIfam" id="TIGR00080">
    <property type="entry name" value="pimt"/>
    <property type="match status" value="1"/>
</dbReference>
<dbReference type="NCBIfam" id="NF001453">
    <property type="entry name" value="PRK00312.1"/>
    <property type="match status" value="1"/>
</dbReference>
<dbReference type="NCBIfam" id="NF010549">
    <property type="entry name" value="PRK13942.1"/>
    <property type="match status" value="1"/>
</dbReference>
<dbReference type="PANTHER" id="PTHR11579">
    <property type="entry name" value="PROTEIN-L-ISOASPARTATE O-METHYLTRANSFERASE"/>
    <property type="match status" value="1"/>
</dbReference>
<dbReference type="PANTHER" id="PTHR11579:SF0">
    <property type="entry name" value="PROTEIN-L-ISOASPARTATE(D-ASPARTATE) O-METHYLTRANSFERASE"/>
    <property type="match status" value="1"/>
</dbReference>
<dbReference type="Pfam" id="PF01135">
    <property type="entry name" value="PCMT"/>
    <property type="match status" value="1"/>
</dbReference>
<dbReference type="SUPFAM" id="SSF53335">
    <property type="entry name" value="S-adenosyl-L-methionine-dependent methyltransferases"/>
    <property type="match status" value="1"/>
</dbReference>
<dbReference type="PROSITE" id="PS01279">
    <property type="entry name" value="PCMT"/>
    <property type="match status" value="1"/>
</dbReference>
<evidence type="ECO:0000250" key="1"/>
<evidence type="ECO:0000305" key="2"/>